<gene>
    <name evidence="4" type="primary">ACA1</name>
    <name type="ordered locus">Os01g0939100</name>
    <name type="ordered locus">LOC_Os01g71240</name>
    <name type="ORF">B1150F11.11</name>
    <name type="ORF">P0504E02.35</name>
</gene>
<keyword id="KW-0067">ATP-binding</keyword>
<keyword id="KW-0106">Calcium</keyword>
<keyword id="KW-0109">Calcium transport</keyword>
<keyword id="KW-0112">Calmodulin-binding</keyword>
<keyword id="KW-0406">Ion transport</keyword>
<keyword id="KW-0460">Magnesium</keyword>
<keyword id="KW-0472">Membrane</keyword>
<keyword id="KW-0479">Metal-binding</keyword>
<keyword id="KW-0547">Nucleotide-binding</keyword>
<keyword id="KW-0597">Phosphoprotein</keyword>
<keyword id="KW-1185">Reference proteome</keyword>
<keyword id="KW-1278">Translocase</keyword>
<keyword id="KW-0812">Transmembrane</keyword>
<keyword id="KW-1133">Transmembrane helix</keyword>
<keyword id="KW-0813">Transport</keyword>
<protein>
    <recommendedName>
        <fullName evidence="5">Calcium-transporting ATPase 1, plasma membrane-type</fullName>
        <shortName evidence="4">OsACA1</shortName>
        <ecNumber>7.2.2.10</ecNumber>
    </recommendedName>
    <alternativeName>
        <fullName evidence="5">Ca(2+)-ATPase isoform 1</fullName>
    </alternativeName>
</protein>
<accession>Q8RUN1</accession>
<accession>A0A0P0VCM3</accession>
<accession>Q0JG69</accession>
<feature type="chain" id="PRO_0000247302" description="Calcium-transporting ATPase 1, plasma membrane-type">
    <location>
        <begin position="1"/>
        <end position="1043"/>
    </location>
</feature>
<feature type="topological domain" description="Cytoplasmic" evidence="2">
    <location>
        <begin position="1"/>
        <end position="178"/>
    </location>
</feature>
<feature type="transmembrane region" description="Helical" evidence="2">
    <location>
        <begin position="179"/>
        <end position="199"/>
    </location>
</feature>
<feature type="transmembrane region" description="Helical" evidence="2">
    <location>
        <begin position="202"/>
        <end position="222"/>
    </location>
</feature>
<feature type="topological domain" description="Cytoplasmic" evidence="2">
    <location>
        <begin position="223"/>
        <end position="258"/>
    </location>
</feature>
<feature type="transmembrane region" description="Helical" evidence="2">
    <location>
        <begin position="259"/>
        <end position="279"/>
    </location>
</feature>
<feature type="transmembrane region" description="Helical" evidence="2">
    <location>
        <begin position="356"/>
        <end position="376"/>
    </location>
</feature>
<feature type="topological domain" description="Cytoplasmic" evidence="2">
    <location>
        <begin position="377"/>
        <end position="395"/>
    </location>
</feature>
<feature type="transmembrane region" description="Helical" evidence="2">
    <location>
        <begin position="396"/>
        <end position="416"/>
    </location>
</feature>
<feature type="transmembrane region" description="Helical" evidence="2">
    <location>
        <begin position="824"/>
        <end position="844"/>
    </location>
</feature>
<feature type="topological domain" description="Cytoplasmic" evidence="2">
    <location>
        <position position="845"/>
    </location>
</feature>
<feature type="transmembrane region" description="Helical" evidence="2">
    <location>
        <begin position="846"/>
        <end position="866"/>
    </location>
</feature>
<feature type="transmembrane region" description="Helical" evidence="2">
    <location>
        <begin position="891"/>
        <end position="911"/>
    </location>
</feature>
<feature type="topological domain" description="Cytoplasmic" evidence="2">
    <location>
        <begin position="912"/>
        <end position="955"/>
    </location>
</feature>
<feature type="transmembrane region" description="Helical" evidence="2">
    <location>
        <begin position="956"/>
        <end position="976"/>
    </location>
</feature>
<feature type="transmembrane region" description="Helical" evidence="2">
    <location>
        <begin position="998"/>
        <end position="1018"/>
    </location>
</feature>
<feature type="topological domain" description="Cytoplasmic" evidence="2">
    <location>
        <begin position="1019"/>
        <end position="1043"/>
    </location>
</feature>
<feature type="region of interest" description="Disordered" evidence="3">
    <location>
        <begin position="1023"/>
        <end position="1043"/>
    </location>
</feature>
<feature type="active site" description="4-aspartylphosphate intermediate" evidence="1">
    <location>
        <position position="460"/>
    </location>
</feature>
<feature type="binding site" evidence="1">
    <location>
        <position position="761"/>
    </location>
    <ligand>
        <name>Mg(2+)</name>
        <dbReference type="ChEBI" id="CHEBI:18420"/>
    </ligand>
</feature>
<feature type="binding site" evidence="1">
    <location>
        <position position="765"/>
    </location>
    <ligand>
        <name>Mg(2+)</name>
        <dbReference type="ChEBI" id="CHEBI:18420"/>
    </ligand>
</feature>
<sequence length="1043" mass="112842">MSFIRKKSMEFLKSFEVPAKNPSEEAQRRWRDAVGTLVKNRRRRFRMVPDLDKRSQAETQRRKIQEKLRVALFVQKAALQFIDAVRKTEHPLPELARQCGFSVSAEELASIVRGHDTKSLRFHNGVDGIARKVAVSLADGVKSDDAGLRAEVYGANQYTEKPPRTFWMFLWDASQDMTLLLLAFCAAVSVAIGLATEGWPSGMYDGVGIMLTILLVVMITAASDYKQSLQFRDLDKEKKKIDVQVTRDGYRQKVSIYDIVVGDIVHLSIGDQVPADGLFIDGYSFVVDESNLSGESEPVHVSTANRFLLGGTKVQDGSARMLVTAVGMRTEWGNLMETLSQGGEDETPLQVKLNGVATIIGKIGLAFAVLTFTVLMARFLLGKAGAPGGLLRWRMVDALAVLNFFAVAVTIIVVAVPEGLPLAVTLSLAFAMKKLMQERALVRHLSACETMGSASCICTDKTGTLTTNHMVVEKIWASGAAQTMSNAKGFDQLTSSMSETFAKVLLEGVFHCSGSEVVRGKDGRHTIMGTPTETAILEFGLAVEKRARIEHTGAGKLKVEPFNSVKKTMAVVIASPSAGGRPRAFLKGASEVVLSRCSLVLDGTGNVEKLTDAKAKRVASAIDAFACEALRTLCLAYQDVDGGGGDIPGEGYTLIAVFGIKDPLRPGVREAVATCHAAGINVRMVTGDNINTAKAIARECGILTDDGIAIEGPEFRNKDPDQMREIIPKIQVMARSLPLDKHTLVTNLRGMFNEVVAVTGDGTNDAPALHEADIGLAMGIAGTEVAKENADVIIMDDNFSTIINVAKWGRSVYINIQKFVQFQLTVNVVALMVNFISASFTGSAPLTIVQLLWVNLIMDTLGALALATEPPNDAMMKRPPVGRGDNFITKVMWRNIVGQSIYQLVVLGVLLLRGKSLLQINGPQADSLLNTFVFNTFVFCQVFNEVNSREMEKINVFSGIFSSWIFSAVVGVTAGFQVIMVELLGTFANTVHLSGKLWLTSVLIGSVGLVIGAILKCIPVESGSDASDRHDGYRPIPTGPSAV</sequence>
<comment type="function">
    <text evidence="1">This magnesium-dependent enzyme catalyzes the hydrolysis of ATP coupled with the translocation of calcium from the cytosol out of the cell, into the endoplasmic reticulum, or into organelles.</text>
</comment>
<comment type="catalytic activity">
    <reaction>
        <text>Ca(2+)(in) + ATP + H2O = Ca(2+)(out) + ADP + phosphate + H(+)</text>
        <dbReference type="Rhea" id="RHEA:18105"/>
        <dbReference type="ChEBI" id="CHEBI:15377"/>
        <dbReference type="ChEBI" id="CHEBI:15378"/>
        <dbReference type="ChEBI" id="CHEBI:29108"/>
        <dbReference type="ChEBI" id="CHEBI:30616"/>
        <dbReference type="ChEBI" id="CHEBI:43474"/>
        <dbReference type="ChEBI" id="CHEBI:456216"/>
        <dbReference type="EC" id="7.2.2.10"/>
    </reaction>
</comment>
<comment type="activity regulation">
    <text evidence="1">Activated by calmodulin.</text>
</comment>
<comment type="subcellular location">
    <subcellularLocation>
        <location evidence="1">Membrane</location>
        <topology evidence="1">Multi-pass membrane protein</topology>
    </subcellularLocation>
</comment>
<comment type="domain">
    <text evidence="1">The N-terminus contains an autoinhibitory calmodulin-binding domain, which binds calmodulin in a calcium-dependent fashion.</text>
</comment>
<comment type="similarity">
    <text evidence="5">Belongs to the cation transport ATPase (P-type) (TC 3.A.3) family. Type IIB subfamily.</text>
</comment>
<dbReference type="EC" id="7.2.2.10"/>
<dbReference type="EMBL" id="AP003269">
    <property type="protein sequence ID" value="BAB89725.1"/>
    <property type="molecule type" value="Genomic_DNA"/>
</dbReference>
<dbReference type="EMBL" id="AP003412">
    <property type="protein sequence ID" value="BAB90248.1"/>
    <property type="molecule type" value="Genomic_DNA"/>
</dbReference>
<dbReference type="EMBL" id="AP008207">
    <property type="protein sequence ID" value="BAF07259.1"/>
    <property type="molecule type" value="Genomic_DNA"/>
</dbReference>
<dbReference type="EMBL" id="AP014957">
    <property type="protein sequence ID" value="BAS76138.1"/>
    <property type="molecule type" value="Genomic_DNA"/>
</dbReference>
<dbReference type="EMBL" id="AK070064">
    <property type="protein sequence ID" value="BAG91749.1"/>
    <property type="molecule type" value="mRNA"/>
</dbReference>
<dbReference type="RefSeq" id="NP_001384944.1">
    <property type="nucleotide sequence ID" value="NM_001398015.1"/>
</dbReference>
<dbReference type="RefSeq" id="XP_015621941.1">
    <property type="nucleotide sequence ID" value="XM_015766455.1"/>
</dbReference>
<dbReference type="SMR" id="Q8RUN1"/>
<dbReference type="FunCoup" id="Q8RUN1">
    <property type="interactions" value="2031"/>
</dbReference>
<dbReference type="STRING" id="39947.Q8RUN1"/>
<dbReference type="PaxDb" id="39947-Q8RUN1"/>
<dbReference type="EnsemblPlants" id="Os01t0939100-01">
    <property type="protein sequence ID" value="Os01t0939100-01"/>
    <property type="gene ID" value="Os01g0939100"/>
</dbReference>
<dbReference type="GeneID" id="4326507"/>
<dbReference type="Gramene" id="Os01t0939100-01">
    <property type="protein sequence ID" value="Os01t0939100-01"/>
    <property type="gene ID" value="Os01g0939100"/>
</dbReference>
<dbReference type="KEGG" id="dosa:Os01g0939100"/>
<dbReference type="eggNOG" id="KOG0204">
    <property type="taxonomic scope" value="Eukaryota"/>
</dbReference>
<dbReference type="HOGENOM" id="CLU_002360_9_2_1"/>
<dbReference type="InParanoid" id="Q8RUN1"/>
<dbReference type="OMA" id="DAMMKRP"/>
<dbReference type="OrthoDB" id="3352408at2759"/>
<dbReference type="Proteomes" id="UP000000763">
    <property type="component" value="Chromosome 1"/>
</dbReference>
<dbReference type="Proteomes" id="UP000059680">
    <property type="component" value="Chromosome 1"/>
</dbReference>
<dbReference type="GO" id="GO:0043231">
    <property type="term" value="C:intracellular membrane-bounded organelle"/>
    <property type="evidence" value="ECO:0000318"/>
    <property type="project" value="GO_Central"/>
</dbReference>
<dbReference type="GO" id="GO:0005886">
    <property type="term" value="C:plasma membrane"/>
    <property type="evidence" value="ECO:0000318"/>
    <property type="project" value="GO_Central"/>
</dbReference>
<dbReference type="GO" id="GO:0005524">
    <property type="term" value="F:ATP binding"/>
    <property type="evidence" value="ECO:0007669"/>
    <property type="project" value="UniProtKB-KW"/>
</dbReference>
<dbReference type="GO" id="GO:0016887">
    <property type="term" value="F:ATP hydrolysis activity"/>
    <property type="evidence" value="ECO:0007669"/>
    <property type="project" value="InterPro"/>
</dbReference>
<dbReference type="GO" id="GO:0005516">
    <property type="term" value="F:calmodulin binding"/>
    <property type="evidence" value="ECO:0007669"/>
    <property type="project" value="UniProtKB-KW"/>
</dbReference>
<dbReference type="GO" id="GO:0046872">
    <property type="term" value="F:metal ion binding"/>
    <property type="evidence" value="ECO:0007669"/>
    <property type="project" value="UniProtKB-KW"/>
</dbReference>
<dbReference type="GO" id="GO:0005388">
    <property type="term" value="F:P-type calcium transporter activity"/>
    <property type="evidence" value="ECO:0000318"/>
    <property type="project" value="GO_Central"/>
</dbReference>
<dbReference type="FunFam" id="1.20.1110.10:FF:000039">
    <property type="entry name" value="Calcium-transporting ATPase"/>
    <property type="match status" value="1"/>
</dbReference>
<dbReference type="FunFam" id="1.20.5.170:FF:000026">
    <property type="entry name" value="Calcium-transporting ATPase"/>
    <property type="match status" value="1"/>
</dbReference>
<dbReference type="FunFam" id="2.70.150.10:FF:000006">
    <property type="entry name" value="Calcium-transporting ATPase"/>
    <property type="match status" value="1"/>
</dbReference>
<dbReference type="FunFam" id="3.40.1110.10:FF:000011">
    <property type="entry name" value="Calcium-transporting ATPase"/>
    <property type="match status" value="1"/>
</dbReference>
<dbReference type="FunFam" id="3.40.50.1000:FF:000011">
    <property type="entry name" value="Calcium-transporting ATPase"/>
    <property type="match status" value="1"/>
</dbReference>
<dbReference type="Gene3D" id="1.20.5.170">
    <property type="match status" value="1"/>
</dbReference>
<dbReference type="Gene3D" id="3.40.1110.10">
    <property type="entry name" value="Calcium-transporting ATPase, cytoplasmic domain N"/>
    <property type="match status" value="1"/>
</dbReference>
<dbReference type="Gene3D" id="2.70.150.10">
    <property type="entry name" value="Calcium-transporting ATPase, cytoplasmic transduction domain A"/>
    <property type="match status" value="1"/>
</dbReference>
<dbReference type="Gene3D" id="1.20.1110.10">
    <property type="entry name" value="Calcium-transporting ATPase, transmembrane domain"/>
    <property type="match status" value="1"/>
</dbReference>
<dbReference type="Gene3D" id="3.40.50.1000">
    <property type="entry name" value="HAD superfamily/HAD-like"/>
    <property type="match status" value="1"/>
</dbReference>
<dbReference type="InterPro" id="IPR006068">
    <property type="entry name" value="ATPase_P-typ_cation-transptr_C"/>
</dbReference>
<dbReference type="InterPro" id="IPR004014">
    <property type="entry name" value="ATPase_P-typ_cation-transptr_N"/>
</dbReference>
<dbReference type="InterPro" id="IPR023299">
    <property type="entry name" value="ATPase_P-typ_cyto_dom_N"/>
</dbReference>
<dbReference type="InterPro" id="IPR018303">
    <property type="entry name" value="ATPase_P-typ_P_site"/>
</dbReference>
<dbReference type="InterPro" id="IPR023298">
    <property type="entry name" value="ATPase_P-typ_TM_dom_sf"/>
</dbReference>
<dbReference type="InterPro" id="IPR008250">
    <property type="entry name" value="ATPase_P-typ_transduc_dom_A_sf"/>
</dbReference>
<dbReference type="InterPro" id="IPR024750">
    <property type="entry name" value="Ca_ATPase_N_dom"/>
</dbReference>
<dbReference type="InterPro" id="IPR036412">
    <property type="entry name" value="HAD-like_sf"/>
</dbReference>
<dbReference type="InterPro" id="IPR023214">
    <property type="entry name" value="HAD_sf"/>
</dbReference>
<dbReference type="InterPro" id="IPR006408">
    <property type="entry name" value="P-type_ATPase_IIB"/>
</dbReference>
<dbReference type="InterPro" id="IPR001757">
    <property type="entry name" value="P_typ_ATPase"/>
</dbReference>
<dbReference type="InterPro" id="IPR044492">
    <property type="entry name" value="P_typ_ATPase_HD_dom"/>
</dbReference>
<dbReference type="NCBIfam" id="TIGR01517">
    <property type="entry name" value="ATPase-IIB_Ca"/>
    <property type="match status" value="1"/>
</dbReference>
<dbReference type="NCBIfam" id="TIGR01494">
    <property type="entry name" value="ATPase_P-type"/>
    <property type="match status" value="4"/>
</dbReference>
<dbReference type="PANTHER" id="PTHR24093:SF502">
    <property type="entry name" value="CALCIUM-TRANSPORTING ATPASE 1, PLASMA MEMBRANE-TYPE"/>
    <property type="match status" value="1"/>
</dbReference>
<dbReference type="PANTHER" id="PTHR24093">
    <property type="entry name" value="CATION TRANSPORTING ATPASE"/>
    <property type="match status" value="1"/>
</dbReference>
<dbReference type="Pfam" id="PF12515">
    <property type="entry name" value="CaATP_NAI"/>
    <property type="match status" value="1"/>
</dbReference>
<dbReference type="Pfam" id="PF13246">
    <property type="entry name" value="Cation_ATPase"/>
    <property type="match status" value="1"/>
</dbReference>
<dbReference type="Pfam" id="PF00689">
    <property type="entry name" value="Cation_ATPase_C"/>
    <property type="match status" value="1"/>
</dbReference>
<dbReference type="Pfam" id="PF00690">
    <property type="entry name" value="Cation_ATPase_N"/>
    <property type="match status" value="1"/>
</dbReference>
<dbReference type="Pfam" id="PF00122">
    <property type="entry name" value="E1-E2_ATPase"/>
    <property type="match status" value="1"/>
</dbReference>
<dbReference type="Pfam" id="PF00702">
    <property type="entry name" value="Hydrolase"/>
    <property type="match status" value="1"/>
</dbReference>
<dbReference type="PRINTS" id="PR00119">
    <property type="entry name" value="CATATPASE"/>
</dbReference>
<dbReference type="PRINTS" id="PR00120">
    <property type="entry name" value="HATPASE"/>
</dbReference>
<dbReference type="SFLD" id="SFLDG00002">
    <property type="entry name" value="C1.7:_P-type_atpase_like"/>
    <property type="match status" value="1"/>
</dbReference>
<dbReference type="SFLD" id="SFLDF00027">
    <property type="entry name" value="p-type_atpase"/>
    <property type="match status" value="1"/>
</dbReference>
<dbReference type="SMART" id="SM00831">
    <property type="entry name" value="Cation_ATPase_N"/>
    <property type="match status" value="1"/>
</dbReference>
<dbReference type="SUPFAM" id="SSF81653">
    <property type="entry name" value="Calcium ATPase, transduction domain A"/>
    <property type="match status" value="1"/>
</dbReference>
<dbReference type="SUPFAM" id="SSF81665">
    <property type="entry name" value="Calcium ATPase, transmembrane domain M"/>
    <property type="match status" value="1"/>
</dbReference>
<dbReference type="SUPFAM" id="SSF56784">
    <property type="entry name" value="HAD-like"/>
    <property type="match status" value="1"/>
</dbReference>
<dbReference type="SUPFAM" id="SSF81660">
    <property type="entry name" value="Metal cation-transporting ATPase, ATP-binding domain N"/>
    <property type="match status" value="1"/>
</dbReference>
<dbReference type="PROSITE" id="PS00154">
    <property type="entry name" value="ATPASE_E1_E2"/>
    <property type="match status" value="1"/>
</dbReference>
<reference key="1">
    <citation type="journal article" date="2002" name="Nature">
        <title>The genome sequence and structure of rice chromosome 1.</title>
        <authorList>
            <person name="Sasaki T."/>
            <person name="Matsumoto T."/>
            <person name="Yamamoto K."/>
            <person name="Sakata K."/>
            <person name="Baba T."/>
            <person name="Katayose Y."/>
            <person name="Wu J."/>
            <person name="Niimura Y."/>
            <person name="Cheng Z."/>
            <person name="Nagamura Y."/>
            <person name="Antonio B.A."/>
            <person name="Kanamori H."/>
            <person name="Hosokawa S."/>
            <person name="Masukawa M."/>
            <person name="Arikawa K."/>
            <person name="Chiden Y."/>
            <person name="Hayashi M."/>
            <person name="Okamoto M."/>
            <person name="Ando T."/>
            <person name="Aoki H."/>
            <person name="Arita K."/>
            <person name="Hamada M."/>
            <person name="Harada C."/>
            <person name="Hijishita S."/>
            <person name="Honda M."/>
            <person name="Ichikawa Y."/>
            <person name="Idonuma A."/>
            <person name="Iijima M."/>
            <person name="Ikeda M."/>
            <person name="Ikeno M."/>
            <person name="Ito S."/>
            <person name="Ito T."/>
            <person name="Ito Y."/>
            <person name="Ito Y."/>
            <person name="Iwabuchi A."/>
            <person name="Kamiya K."/>
            <person name="Karasawa W."/>
            <person name="Katagiri S."/>
            <person name="Kikuta A."/>
            <person name="Kobayashi N."/>
            <person name="Kono I."/>
            <person name="Machita K."/>
            <person name="Maehara T."/>
            <person name="Mizuno H."/>
            <person name="Mizubayashi T."/>
            <person name="Mukai Y."/>
            <person name="Nagasaki H."/>
            <person name="Nakashima M."/>
            <person name="Nakama Y."/>
            <person name="Nakamichi Y."/>
            <person name="Nakamura M."/>
            <person name="Namiki N."/>
            <person name="Negishi M."/>
            <person name="Ohta I."/>
            <person name="Ono N."/>
            <person name="Saji S."/>
            <person name="Sakai K."/>
            <person name="Shibata M."/>
            <person name="Shimokawa T."/>
            <person name="Shomura A."/>
            <person name="Song J."/>
            <person name="Takazaki Y."/>
            <person name="Terasawa K."/>
            <person name="Tsuji K."/>
            <person name="Waki K."/>
            <person name="Yamagata H."/>
            <person name="Yamane H."/>
            <person name="Yoshiki S."/>
            <person name="Yoshihara R."/>
            <person name="Yukawa K."/>
            <person name="Zhong H."/>
            <person name="Iwama H."/>
            <person name="Endo T."/>
            <person name="Ito H."/>
            <person name="Hahn J.H."/>
            <person name="Kim H.-I."/>
            <person name="Eun M.-Y."/>
            <person name="Yano M."/>
            <person name="Jiang J."/>
            <person name="Gojobori T."/>
        </authorList>
    </citation>
    <scope>NUCLEOTIDE SEQUENCE [LARGE SCALE GENOMIC DNA]</scope>
    <source>
        <strain>cv. Nipponbare</strain>
    </source>
</reference>
<reference key="2">
    <citation type="journal article" date="2005" name="Nature">
        <title>The map-based sequence of the rice genome.</title>
        <authorList>
            <consortium name="International rice genome sequencing project (IRGSP)"/>
        </authorList>
    </citation>
    <scope>NUCLEOTIDE SEQUENCE [LARGE SCALE GENOMIC DNA]</scope>
    <source>
        <strain>cv. Nipponbare</strain>
    </source>
</reference>
<reference key="3">
    <citation type="journal article" date="2008" name="Nucleic Acids Res.">
        <title>The rice annotation project database (RAP-DB): 2008 update.</title>
        <authorList>
            <consortium name="The rice annotation project (RAP)"/>
        </authorList>
    </citation>
    <scope>GENOME REANNOTATION</scope>
    <source>
        <strain>cv. Nipponbare</strain>
    </source>
</reference>
<reference key="4">
    <citation type="journal article" date="2013" name="Rice">
        <title>Improvement of the Oryza sativa Nipponbare reference genome using next generation sequence and optical map data.</title>
        <authorList>
            <person name="Kawahara Y."/>
            <person name="de la Bastide M."/>
            <person name="Hamilton J.P."/>
            <person name="Kanamori H."/>
            <person name="McCombie W.R."/>
            <person name="Ouyang S."/>
            <person name="Schwartz D.C."/>
            <person name="Tanaka T."/>
            <person name="Wu J."/>
            <person name="Zhou S."/>
            <person name="Childs K.L."/>
            <person name="Davidson R.M."/>
            <person name="Lin H."/>
            <person name="Quesada-Ocampo L."/>
            <person name="Vaillancourt B."/>
            <person name="Sakai H."/>
            <person name="Lee S.S."/>
            <person name="Kim J."/>
            <person name="Numa H."/>
            <person name="Itoh T."/>
            <person name="Buell C.R."/>
            <person name="Matsumoto T."/>
        </authorList>
    </citation>
    <scope>GENOME REANNOTATION</scope>
    <source>
        <strain>cv. Nipponbare</strain>
    </source>
</reference>
<reference key="5">
    <citation type="journal article" date="2003" name="Science">
        <title>Collection, mapping, and annotation of over 28,000 cDNA clones from japonica rice.</title>
        <authorList>
            <consortium name="The rice full-length cDNA consortium"/>
        </authorList>
    </citation>
    <scope>NUCLEOTIDE SEQUENCE [LARGE SCALE MRNA]</scope>
    <source>
        <strain>cv. Nipponbare</strain>
    </source>
</reference>
<reference key="6">
    <citation type="journal article" date="2014" name="FEBS J.">
        <title>Genome-wide expressional and functional analysis of calcium transport elements during abiotic stress and development in rice.</title>
        <authorList>
            <person name="Singh A."/>
            <person name="Kanwar P."/>
            <person name="Yadav A.K."/>
            <person name="Mishra M."/>
            <person name="Jha S.K."/>
            <person name="Baranwal V."/>
            <person name="Pandey A."/>
            <person name="Kapoor S."/>
            <person name="Tyagi A.K."/>
            <person name="Pandey G.K."/>
        </authorList>
    </citation>
    <scope>GENE FAMILY</scope>
    <scope>NOMENCLATURE</scope>
</reference>
<name>ACA1_ORYSJ</name>
<proteinExistence type="evidence at transcript level"/>
<organism>
    <name type="scientific">Oryza sativa subsp. japonica</name>
    <name type="common">Rice</name>
    <dbReference type="NCBI Taxonomy" id="39947"/>
    <lineage>
        <taxon>Eukaryota</taxon>
        <taxon>Viridiplantae</taxon>
        <taxon>Streptophyta</taxon>
        <taxon>Embryophyta</taxon>
        <taxon>Tracheophyta</taxon>
        <taxon>Spermatophyta</taxon>
        <taxon>Magnoliopsida</taxon>
        <taxon>Liliopsida</taxon>
        <taxon>Poales</taxon>
        <taxon>Poaceae</taxon>
        <taxon>BOP clade</taxon>
        <taxon>Oryzoideae</taxon>
        <taxon>Oryzeae</taxon>
        <taxon>Oryzinae</taxon>
        <taxon>Oryza</taxon>
        <taxon>Oryza sativa</taxon>
    </lineage>
</organism>
<evidence type="ECO:0000250" key="1"/>
<evidence type="ECO:0000255" key="2"/>
<evidence type="ECO:0000256" key="3">
    <source>
        <dbReference type="SAM" id="MobiDB-lite"/>
    </source>
</evidence>
<evidence type="ECO:0000303" key="4">
    <source>
    </source>
</evidence>
<evidence type="ECO:0000305" key="5"/>